<keyword id="KW-0066">ATP synthesis</keyword>
<keyword id="KW-0997">Cell inner membrane</keyword>
<keyword id="KW-1003">Cell membrane</keyword>
<keyword id="KW-0138">CF(0)</keyword>
<keyword id="KW-0375">Hydrogen ion transport</keyword>
<keyword id="KW-0406">Ion transport</keyword>
<keyword id="KW-0472">Membrane</keyword>
<keyword id="KW-0812">Transmembrane</keyword>
<keyword id="KW-1133">Transmembrane helix</keyword>
<keyword id="KW-0813">Transport</keyword>
<gene>
    <name evidence="1" type="primary">atpB</name>
    <name type="ordered locus">YPN_3984</name>
    <name type="ORF">YP516_4520</name>
</gene>
<sequence>MSASGEISTPRDYIGHHLNHLQLDLRTFELVNPHSTGPATFWTLNIDSLFFSVVLGLAFLLVFRKVAASATSGVPGKLQTAVELIIGFVDNSVRDMYHGKSKVIAPLALTVFVWVLLMNMMDLLPIDLLPYIGEHVFGLPALRVVPTADVSITLSMALGVFILIIFYSIKMKGVGGFTKELTMQPFNHPIFIPVNLILEGVSLLSKPLSLGLRLFGNMYAGELIFILIAGLLPWWSQWMLSVPWAIFHILIITLQAFIFMVLTIVYLSMASEEH</sequence>
<evidence type="ECO:0000255" key="1">
    <source>
        <dbReference type="HAMAP-Rule" id="MF_01393"/>
    </source>
</evidence>
<dbReference type="EMBL" id="CP000305">
    <property type="protein sequence ID" value="ABG20311.1"/>
    <property type="molecule type" value="Genomic_DNA"/>
</dbReference>
<dbReference type="EMBL" id="ACNQ01000019">
    <property type="protein sequence ID" value="EEO74910.1"/>
    <property type="molecule type" value="Genomic_DNA"/>
</dbReference>
<dbReference type="RefSeq" id="WP_002228150.1">
    <property type="nucleotide sequence ID" value="NZ_ACNQ01000019.1"/>
</dbReference>
<dbReference type="SMR" id="Q1CCG9"/>
<dbReference type="GeneID" id="96663465"/>
<dbReference type="KEGG" id="ypn:YPN_3984"/>
<dbReference type="HOGENOM" id="CLU_041018_1_0_6"/>
<dbReference type="Proteomes" id="UP000008936">
    <property type="component" value="Chromosome"/>
</dbReference>
<dbReference type="GO" id="GO:0005886">
    <property type="term" value="C:plasma membrane"/>
    <property type="evidence" value="ECO:0007669"/>
    <property type="project" value="UniProtKB-SubCell"/>
</dbReference>
<dbReference type="GO" id="GO:0045259">
    <property type="term" value="C:proton-transporting ATP synthase complex"/>
    <property type="evidence" value="ECO:0007669"/>
    <property type="project" value="UniProtKB-KW"/>
</dbReference>
<dbReference type="GO" id="GO:0046933">
    <property type="term" value="F:proton-transporting ATP synthase activity, rotational mechanism"/>
    <property type="evidence" value="ECO:0007669"/>
    <property type="project" value="UniProtKB-UniRule"/>
</dbReference>
<dbReference type="GO" id="GO:0042777">
    <property type="term" value="P:proton motive force-driven plasma membrane ATP synthesis"/>
    <property type="evidence" value="ECO:0007669"/>
    <property type="project" value="TreeGrafter"/>
</dbReference>
<dbReference type="CDD" id="cd00310">
    <property type="entry name" value="ATP-synt_Fo_a_6"/>
    <property type="match status" value="1"/>
</dbReference>
<dbReference type="FunFam" id="1.20.120.220:FF:000002">
    <property type="entry name" value="ATP synthase subunit a"/>
    <property type="match status" value="1"/>
</dbReference>
<dbReference type="Gene3D" id="1.20.120.220">
    <property type="entry name" value="ATP synthase, F0 complex, subunit A"/>
    <property type="match status" value="1"/>
</dbReference>
<dbReference type="HAMAP" id="MF_01393">
    <property type="entry name" value="ATP_synth_a_bact"/>
    <property type="match status" value="1"/>
</dbReference>
<dbReference type="InterPro" id="IPR045082">
    <property type="entry name" value="ATP_syn_F0_a_bact/chloroplast"/>
</dbReference>
<dbReference type="InterPro" id="IPR000568">
    <property type="entry name" value="ATP_synth_F0_asu"/>
</dbReference>
<dbReference type="InterPro" id="IPR023011">
    <property type="entry name" value="ATP_synth_F0_asu_AS"/>
</dbReference>
<dbReference type="InterPro" id="IPR035908">
    <property type="entry name" value="F0_ATP_A_sf"/>
</dbReference>
<dbReference type="NCBIfam" id="TIGR01131">
    <property type="entry name" value="ATP_synt_6_or_A"/>
    <property type="match status" value="1"/>
</dbReference>
<dbReference type="NCBIfam" id="NF004477">
    <property type="entry name" value="PRK05815.1-1"/>
    <property type="match status" value="1"/>
</dbReference>
<dbReference type="PANTHER" id="PTHR42823">
    <property type="entry name" value="ATP SYNTHASE SUBUNIT A, CHLOROPLASTIC"/>
    <property type="match status" value="1"/>
</dbReference>
<dbReference type="PANTHER" id="PTHR42823:SF3">
    <property type="entry name" value="ATP SYNTHASE SUBUNIT A, CHLOROPLASTIC"/>
    <property type="match status" value="1"/>
</dbReference>
<dbReference type="Pfam" id="PF00119">
    <property type="entry name" value="ATP-synt_A"/>
    <property type="match status" value="1"/>
</dbReference>
<dbReference type="PRINTS" id="PR00123">
    <property type="entry name" value="ATPASEA"/>
</dbReference>
<dbReference type="SUPFAM" id="SSF81336">
    <property type="entry name" value="F1F0 ATP synthase subunit A"/>
    <property type="match status" value="1"/>
</dbReference>
<dbReference type="PROSITE" id="PS00449">
    <property type="entry name" value="ATPASE_A"/>
    <property type="match status" value="1"/>
</dbReference>
<comment type="function">
    <text evidence="1">Key component of the proton channel; it plays a direct role in the translocation of protons across the membrane.</text>
</comment>
<comment type="subunit">
    <text evidence="1">F-type ATPases have 2 components, CF(1) - the catalytic core - and CF(0) - the membrane proton channel. CF(1) has five subunits: alpha(3), beta(3), gamma(1), delta(1), epsilon(1). CF(0) has three main subunits: a(1), b(2) and c(9-12). The alpha and beta chains form an alternating ring which encloses part of the gamma chain. CF(1) is attached to CF(0) by a central stalk formed by the gamma and epsilon chains, while a peripheral stalk is formed by the delta and b chains.</text>
</comment>
<comment type="subcellular location">
    <subcellularLocation>
        <location evidence="1">Cell inner membrane</location>
        <topology evidence="1">Multi-pass membrane protein</topology>
    </subcellularLocation>
</comment>
<comment type="similarity">
    <text evidence="1">Belongs to the ATPase A chain family.</text>
</comment>
<proteinExistence type="inferred from homology"/>
<accession>Q1CCG9</accession>
<accession>D1Q307</accession>
<reference key="1">
    <citation type="journal article" date="2006" name="J. Bacteriol.">
        <title>Complete genome sequence of Yersinia pestis strains Antiqua and Nepal516: evidence of gene reduction in an emerging pathogen.</title>
        <authorList>
            <person name="Chain P.S.G."/>
            <person name="Hu P."/>
            <person name="Malfatti S.A."/>
            <person name="Radnedge L."/>
            <person name="Larimer F."/>
            <person name="Vergez L.M."/>
            <person name="Worsham P."/>
            <person name="Chu M.C."/>
            <person name="Andersen G.L."/>
        </authorList>
    </citation>
    <scope>NUCLEOTIDE SEQUENCE [LARGE SCALE GENOMIC DNA]</scope>
    <source>
        <strain>Nepal516</strain>
    </source>
</reference>
<reference key="2">
    <citation type="submission" date="2009-04" db="EMBL/GenBank/DDBJ databases">
        <title>Yersinia pestis Nepal516A whole genome shotgun sequencing project.</title>
        <authorList>
            <person name="Plunkett G. III"/>
            <person name="Anderson B.D."/>
            <person name="Baumler D.J."/>
            <person name="Burland V."/>
            <person name="Cabot E.L."/>
            <person name="Glasner J.D."/>
            <person name="Mau B."/>
            <person name="Neeno-Eckwall E."/>
            <person name="Perna N.T."/>
            <person name="Munk A.C."/>
            <person name="Tapia R."/>
            <person name="Green L.D."/>
            <person name="Rogers Y.C."/>
            <person name="Detter J.C."/>
            <person name="Bruce D.C."/>
            <person name="Brettin T.S."/>
        </authorList>
    </citation>
    <scope>NUCLEOTIDE SEQUENCE [LARGE SCALE GENOMIC DNA]</scope>
    <source>
        <strain>Nepal516</strain>
    </source>
</reference>
<organism>
    <name type="scientific">Yersinia pestis bv. Antiqua (strain Nepal516)</name>
    <dbReference type="NCBI Taxonomy" id="377628"/>
    <lineage>
        <taxon>Bacteria</taxon>
        <taxon>Pseudomonadati</taxon>
        <taxon>Pseudomonadota</taxon>
        <taxon>Gammaproteobacteria</taxon>
        <taxon>Enterobacterales</taxon>
        <taxon>Yersiniaceae</taxon>
        <taxon>Yersinia</taxon>
    </lineage>
</organism>
<name>ATP6_YERPN</name>
<feature type="chain" id="PRO_0000362517" description="ATP synthase subunit a">
    <location>
        <begin position="1"/>
        <end position="274"/>
    </location>
</feature>
<feature type="transmembrane region" description="Helical" evidence="1">
    <location>
        <begin position="43"/>
        <end position="63"/>
    </location>
</feature>
<feature type="transmembrane region" description="Helical" evidence="1">
    <location>
        <begin position="103"/>
        <end position="123"/>
    </location>
</feature>
<feature type="transmembrane region" description="Helical" evidence="1">
    <location>
        <begin position="149"/>
        <end position="169"/>
    </location>
</feature>
<feature type="transmembrane region" description="Helical" evidence="1">
    <location>
        <begin position="223"/>
        <end position="243"/>
    </location>
</feature>
<feature type="transmembrane region" description="Helical" evidence="1">
    <location>
        <begin position="245"/>
        <end position="265"/>
    </location>
</feature>
<protein>
    <recommendedName>
        <fullName evidence="1">ATP synthase subunit a</fullName>
    </recommendedName>
    <alternativeName>
        <fullName evidence="1">ATP synthase F0 sector subunit a</fullName>
    </alternativeName>
    <alternativeName>
        <fullName evidence="1">F-ATPase subunit 6</fullName>
    </alternativeName>
</protein>